<name>GPPA_SALA4</name>
<proteinExistence type="inferred from homology"/>
<evidence type="ECO:0000255" key="1">
    <source>
        <dbReference type="HAMAP-Rule" id="MF_01550"/>
    </source>
</evidence>
<gene>
    <name evidence="1" type="primary">gppA</name>
    <name type="ordered locus">SeAg_B4140</name>
</gene>
<accession>B5EZ39</accession>
<dbReference type="EC" id="3.6.1.40" evidence="1"/>
<dbReference type="EMBL" id="CP001138">
    <property type="protein sequence ID" value="ACH51075.1"/>
    <property type="molecule type" value="Genomic_DNA"/>
</dbReference>
<dbReference type="RefSeq" id="WP_001089447.1">
    <property type="nucleotide sequence ID" value="NC_011149.1"/>
</dbReference>
<dbReference type="SMR" id="B5EZ39"/>
<dbReference type="KEGG" id="sea:SeAg_B4140"/>
<dbReference type="HOGENOM" id="CLU_025908_4_0_6"/>
<dbReference type="UniPathway" id="UPA00908">
    <property type="reaction ID" value="UER00885"/>
</dbReference>
<dbReference type="Proteomes" id="UP000008819">
    <property type="component" value="Chromosome"/>
</dbReference>
<dbReference type="GO" id="GO:0008894">
    <property type="term" value="F:guanosine-5'-triphosphate,3'-diphosphate diphosphatase activity"/>
    <property type="evidence" value="ECO:0007669"/>
    <property type="project" value="UniProtKB-UniRule"/>
</dbReference>
<dbReference type="GO" id="GO:0015974">
    <property type="term" value="P:guanosine pentaphosphate catabolic process"/>
    <property type="evidence" value="ECO:0007669"/>
    <property type="project" value="InterPro"/>
</dbReference>
<dbReference type="GO" id="GO:0015970">
    <property type="term" value="P:guanosine tetraphosphate biosynthetic process"/>
    <property type="evidence" value="ECO:0007669"/>
    <property type="project" value="UniProtKB-UniRule"/>
</dbReference>
<dbReference type="GO" id="GO:0015949">
    <property type="term" value="P:nucleobase-containing small molecule interconversion"/>
    <property type="evidence" value="ECO:0007669"/>
    <property type="project" value="TreeGrafter"/>
</dbReference>
<dbReference type="CDD" id="cd24117">
    <property type="entry name" value="ASKHA_NBD_EcGppA-like"/>
    <property type="match status" value="1"/>
</dbReference>
<dbReference type="FunFam" id="1.10.3210.10:FF:000004">
    <property type="entry name" value="Guanosine-5'-triphosphate,3'-diphosphate pyrophosphatase"/>
    <property type="match status" value="1"/>
</dbReference>
<dbReference type="FunFam" id="3.30.420.150:FF:000001">
    <property type="entry name" value="Guanosine-5'-triphosphate,3'-diphosphate pyrophosphatase"/>
    <property type="match status" value="1"/>
</dbReference>
<dbReference type="FunFam" id="3.30.420.40:FF:000023">
    <property type="entry name" value="Guanosine-5'-triphosphate,3'-diphosphate pyrophosphatase"/>
    <property type="match status" value="1"/>
</dbReference>
<dbReference type="Gene3D" id="3.30.420.40">
    <property type="match status" value="1"/>
</dbReference>
<dbReference type="Gene3D" id="3.30.420.150">
    <property type="entry name" value="Exopolyphosphatase. Domain 2"/>
    <property type="match status" value="1"/>
</dbReference>
<dbReference type="Gene3D" id="1.10.3210.10">
    <property type="entry name" value="Hypothetical protein af1432"/>
    <property type="match status" value="1"/>
</dbReference>
<dbReference type="HAMAP" id="MF_01550">
    <property type="entry name" value="GppA"/>
    <property type="match status" value="1"/>
</dbReference>
<dbReference type="InterPro" id="IPR043129">
    <property type="entry name" value="ATPase_NBD"/>
</dbReference>
<dbReference type="InterPro" id="IPR050273">
    <property type="entry name" value="GppA/Ppx_hydrolase"/>
</dbReference>
<dbReference type="InterPro" id="IPR023709">
    <property type="entry name" value="Guo-5TP_3DP_PyrP"/>
</dbReference>
<dbReference type="InterPro" id="IPR048950">
    <property type="entry name" value="Ppx_GppA_C"/>
</dbReference>
<dbReference type="InterPro" id="IPR003695">
    <property type="entry name" value="Ppx_GppA_N"/>
</dbReference>
<dbReference type="InterPro" id="IPR030673">
    <property type="entry name" value="PyroPPase_GppA_Ppx"/>
</dbReference>
<dbReference type="NCBIfam" id="NF008260">
    <property type="entry name" value="PRK11031.1"/>
    <property type="match status" value="1"/>
</dbReference>
<dbReference type="PANTHER" id="PTHR30005">
    <property type="entry name" value="EXOPOLYPHOSPHATASE"/>
    <property type="match status" value="1"/>
</dbReference>
<dbReference type="PANTHER" id="PTHR30005:SF0">
    <property type="entry name" value="RETROGRADE REGULATION PROTEIN 2"/>
    <property type="match status" value="1"/>
</dbReference>
<dbReference type="Pfam" id="PF02541">
    <property type="entry name" value="Ppx-GppA"/>
    <property type="match status" value="1"/>
</dbReference>
<dbReference type="Pfam" id="PF21447">
    <property type="entry name" value="Ppx-GppA_III"/>
    <property type="match status" value="1"/>
</dbReference>
<dbReference type="PIRSF" id="PIRSF001267">
    <property type="entry name" value="Pyrophosphatase_GppA_Ppx"/>
    <property type="match status" value="1"/>
</dbReference>
<dbReference type="SUPFAM" id="SSF53067">
    <property type="entry name" value="Actin-like ATPase domain"/>
    <property type="match status" value="2"/>
</dbReference>
<dbReference type="SUPFAM" id="SSF109604">
    <property type="entry name" value="HD-domain/PDEase-like"/>
    <property type="match status" value="1"/>
</dbReference>
<protein>
    <recommendedName>
        <fullName evidence="1">Guanosine-5'-triphosphate,3'-diphosphate pyrophosphatase</fullName>
        <ecNumber evidence="1">3.6.1.40</ecNumber>
    </recommendedName>
    <alternativeName>
        <fullName evidence="1">Guanosine pentaphosphate phosphohydrolase</fullName>
    </alternativeName>
    <alternativeName>
        <fullName evidence="1">pppGpp-5'-phosphohydrolase</fullName>
    </alternativeName>
</protein>
<keyword id="KW-0378">Hydrolase</keyword>
<reference key="1">
    <citation type="journal article" date="2011" name="J. Bacteriol.">
        <title>Comparative genomics of 28 Salmonella enterica isolates: evidence for CRISPR-mediated adaptive sublineage evolution.</title>
        <authorList>
            <person name="Fricke W.F."/>
            <person name="Mammel M.K."/>
            <person name="McDermott P.F."/>
            <person name="Tartera C."/>
            <person name="White D.G."/>
            <person name="Leclerc J.E."/>
            <person name="Ravel J."/>
            <person name="Cebula T.A."/>
        </authorList>
    </citation>
    <scope>NUCLEOTIDE SEQUENCE [LARGE SCALE GENOMIC DNA]</scope>
    <source>
        <strain>SL483</strain>
    </source>
</reference>
<organism>
    <name type="scientific">Salmonella agona (strain SL483)</name>
    <dbReference type="NCBI Taxonomy" id="454166"/>
    <lineage>
        <taxon>Bacteria</taxon>
        <taxon>Pseudomonadati</taxon>
        <taxon>Pseudomonadota</taxon>
        <taxon>Gammaproteobacteria</taxon>
        <taxon>Enterobacterales</taxon>
        <taxon>Enterobacteriaceae</taxon>
        <taxon>Salmonella</taxon>
    </lineage>
</organism>
<sequence>MNSTSLYAAIDLGSNSFHMLVVREAAGSIQTLTRIKRKVRLAAGLNNDNHLSAEAMERGWQCLRLFAERLQDIPQPQIRVVATATLRLAVNAGEFIAKAQTILGCPVQVISGEEEARLIYQGVAHTTGGADQRLVVDIGGASTELVTGTGAQTTSLFSLSMGCVTWLERYFSDRNLAQENFDDAEKAARDVLRPVADELRFHGWKVCVGASGTVQALQEIMMAQGMDERITLAKLQQLKQRAIQCGRLEELEIEGLTLERALVFPSGLAILIAIFTELNIQSMTLAGGALREGLVYGMLHLAVDQDIRSRTLRNIQRRFIVDTDQANRVAKLADNFLKQVENAWHIEPISRELLLSACQLHEIGLSVDFKQAPYHAAYLVRHLDLPGYTPAQKKLLATLLLNQTNPVDLSSLHQQNAVPPRVAEQLCRLLRLAILFAGRRRDDLVPEITLQALNENLTLTLPGDWLAHHPLGKELIDQESQWQSYVHWPLDVR</sequence>
<comment type="function">
    <text evidence="1">Catalyzes the conversion of pppGpp to ppGpp. Guanosine pentaphosphate (pppGpp) is a cytoplasmic signaling molecule which together with ppGpp controls the 'stringent response', an adaptive process that allows bacteria to respond to amino acid starvation, resulting in the coordinated regulation of numerous cellular activities.</text>
</comment>
<comment type="catalytic activity">
    <reaction evidence="1">
        <text>guanosine 3'-diphosphate 5'-triphosphate + H2O = guanosine 3',5'-bis(diphosphate) + phosphate + H(+)</text>
        <dbReference type="Rhea" id="RHEA:13073"/>
        <dbReference type="ChEBI" id="CHEBI:15377"/>
        <dbReference type="ChEBI" id="CHEBI:15378"/>
        <dbReference type="ChEBI" id="CHEBI:43474"/>
        <dbReference type="ChEBI" id="CHEBI:77828"/>
        <dbReference type="ChEBI" id="CHEBI:142410"/>
        <dbReference type="EC" id="3.6.1.40"/>
    </reaction>
</comment>
<comment type="pathway">
    <text evidence="1">Purine metabolism; ppGpp biosynthesis; ppGpp from GTP: step 2/2.</text>
</comment>
<comment type="similarity">
    <text evidence="1">Belongs to the GppA/Ppx family. GppA subfamily.</text>
</comment>
<feature type="chain" id="PRO_1000192532" description="Guanosine-5'-triphosphate,3'-diphosphate pyrophosphatase">
    <location>
        <begin position="1"/>
        <end position="493"/>
    </location>
</feature>